<organism>
    <name type="scientific">Mycobacterium tuberculosis (strain CDC 1551 / Oshkosh)</name>
    <dbReference type="NCBI Taxonomy" id="83331"/>
    <lineage>
        <taxon>Bacteria</taxon>
        <taxon>Bacillati</taxon>
        <taxon>Actinomycetota</taxon>
        <taxon>Actinomycetes</taxon>
        <taxon>Mycobacteriales</taxon>
        <taxon>Mycobacteriaceae</taxon>
        <taxon>Mycobacterium</taxon>
        <taxon>Mycobacterium tuberculosis complex</taxon>
    </lineage>
</organism>
<dbReference type="EMBL" id="AE000516">
    <property type="protein sequence ID" value="AAK45401.1"/>
    <property type="molecule type" value="Genomic_DNA"/>
</dbReference>
<dbReference type="PIR" id="B70537">
    <property type="entry name" value="B70537"/>
</dbReference>
<dbReference type="RefSeq" id="WP_003405863.1">
    <property type="nucleotide sequence ID" value="NZ_KK341227.1"/>
</dbReference>
<dbReference type="SMR" id="P9WJ32"/>
<dbReference type="KEGG" id="mtc:MT1143.1"/>
<dbReference type="PATRIC" id="fig|83331.31.peg.1236"/>
<dbReference type="HOGENOM" id="CLU_179376_1_0_11"/>
<dbReference type="Proteomes" id="UP000001020">
    <property type="component" value="Chromosome"/>
</dbReference>
<dbReference type="InterPro" id="IPR019239">
    <property type="entry name" value="VapB_antitoxin"/>
</dbReference>
<dbReference type="Pfam" id="PF09957">
    <property type="entry name" value="VapB_antitoxin"/>
    <property type="match status" value="1"/>
</dbReference>
<proteinExistence type="inferred from homology"/>
<protein>
    <recommendedName>
        <fullName>Antitoxin VapB32</fullName>
    </recommendedName>
</protein>
<sequence>MRTTVTVDDALLAKAAELTGVKEKSTLLREGLQTLVRVESARRLAALGGTDPQATAAPRRRTSPR</sequence>
<accession>P9WJ32</accession>
<accession>L0T5Y0</accession>
<accession>O06565</accession>
<accession>Q7D8U3</accession>
<name>VPB32_MYCTO</name>
<reference key="1">
    <citation type="journal article" date="2002" name="J. Bacteriol.">
        <title>Whole-genome comparison of Mycobacterium tuberculosis clinical and laboratory strains.</title>
        <authorList>
            <person name="Fleischmann R.D."/>
            <person name="Alland D."/>
            <person name="Eisen J.A."/>
            <person name="Carpenter L."/>
            <person name="White O."/>
            <person name="Peterson J.D."/>
            <person name="DeBoy R.T."/>
            <person name="Dodson R.J."/>
            <person name="Gwinn M.L."/>
            <person name="Haft D.H."/>
            <person name="Hickey E.K."/>
            <person name="Kolonay J.F."/>
            <person name="Nelson W.C."/>
            <person name="Umayam L.A."/>
            <person name="Ermolaeva M.D."/>
            <person name="Salzberg S.L."/>
            <person name="Delcher A."/>
            <person name="Utterback T.R."/>
            <person name="Weidman J.F."/>
            <person name="Khouri H.M."/>
            <person name="Gill J."/>
            <person name="Mikula A."/>
            <person name="Bishai W."/>
            <person name="Jacobs W.R. Jr."/>
            <person name="Venter J.C."/>
            <person name="Fraser C.M."/>
        </authorList>
    </citation>
    <scope>NUCLEOTIDE SEQUENCE [LARGE SCALE GENOMIC DNA]</scope>
    <source>
        <strain>CDC 1551 / Oshkosh</strain>
    </source>
</reference>
<comment type="function">
    <text evidence="1">Antitoxin component of a type II toxin-antitoxin (TA) system.</text>
</comment>
<keyword id="KW-1185">Reference proteome</keyword>
<keyword id="KW-1277">Toxin-antitoxin system</keyword>
<gene>
    <name type="primary">vapB32</name>
    <name type="ordered locus">MT1143.1</name>
</gene>
<evidence type="ECO:0000250" key="1"/>
<evidence type="ECO:0000256" key="2">
    <source>
        <dbReference type="SAM" id="MobiDB-lite"/>
    </source>
</evidence>
<feature type="chain" id="PRO_0000427900" description="Antitoxin VapB32">
    <location>
        <begin position="1"/>
        <end position="65"/>
    </location>
</feature>
<feature type="region of interest" description="Disordered" evidence="2">
    <location>
        <begin position="46"/>
        <end position="65"/>
    </location>
</feature>